<dbReference type="EC" id="3.1.26.5" evidence="1"/>
<dbReference type="EMBL" id="AE000666">
    <property type="protein sequence ID" value="AAB85192.1"/>
    <property type="molecule type" value="Genomic_DNA"/>
</dbReference>
<dbReference type="PIR" id="E69191">
    <property type="entry name" value="E69191"/>
</dbReference>
<dbReference type="RefSeq" id="WP_010876326.1">
    <property type="nucleotide sequence ID" value="NC_000916.1"/>
</dbReference>
<dbReference type="SMR" id="O26783"/>
<dbReference type="IntAct" id="O26783">
    <property type="interactions" value="1"/>
</dbReference>
<dbReference type="STRING" id="187420.MTH_687"/>
<dbReference type="PaxDb" id="187420-MTH_687"/>
<dbReference type="EnsemblBacteria" id="AAB85192">
    <property type="protein sequence ID" value="AAB85192"/>
    <property type="gene ID" value="MTH_687"/>
</dbReference>
<dbReference type="GeneID" id="82297146"/>
<dbReference type="KEGG" id="mth:MTH_687"/>
<dbReference type="PATRIC" id="fig|187420.15.peg.668"/>
<dbReference type="HOGENOM" id="CLU_137733_1_0_2"/>
<dbReference type="InParanoid" id="O26783"/>
<dbReference type="Proteomes" id="UP000005223">
    <property type="component" value="Chromosome"/>
</dbReference>
<dbReference type="GO" id="GO:0005737">
    <property type="term" value="C:cytoplasm"/>
    <property type="evidence" value="ECO:0007669"/>
    <property type="project" value="UniProtKB-SubCell"/>
</dbReference>
<dbReference type="GO" id="GO:0030677">
    <property type="term" value="C:ribonuclease P complex"/>
    <property type="evidence" value="ECO:0007669"/>
    <property type="project" value="UniProtKB-UniRule"/>
</dbReference>
<dbReference type="GO" id="GO:0004526">
    <property type="term" value="F:ribonuclease P activity"/>
    <property type="evidence" value="ECO:0007669"/>
    <property type="project" value="UniProtKB-UniRule"/>
</dbReference>
<dbReference type="GO" id="GO:0001682">
    <property type="term" value="P:tRNA 5'-leader removal"/>
    <property type="evidence" value="ECO:0007669"/>
    <property type="project" value="UniProtKB-UniRule"/>
</dbReference>
<dbReference type="Gene3D" id="3.30.70.3250">
    <property type="entry name" value="Ribonuclease P, Pop5 subunit"/>
    <property type="match status" value="1"/>
</dbReference>
<dbReference type="HAMAP" id="MF_00755">
    <property type="entry name" value="RNase_P_2"/>
    <property type="match status" value="1"/>
</dbReference>
<dbReference type="InterPro" id="IPR002759">
    <property type="entry name" value="Pop5/Rpp14/Rnp2-like"/>
</dbReference>
<dbReference type="InterPro" id="IPR038085">
    <property type="entry name" value="Rnp2-like_sf"/>
</dbReference>
<dbReference type="InterPro" id="IPR016434">
    <property type="entry name" value="Rnp2_archaea"/>
</dbReference>
<dbReference type="PANTHER" id="PTHR15441">
    <property type="entry name" value="RIBONUCLEASE P PROTEIN SUBUNIT P14"/>
    <property type="match status" value="1"/>
</dbReference>
<dbReference type="PANTHER" id="PTHR15441:SF2">
    <property type="entry name" value="RIBONUCLEASE P_MRP PROTEIN SUBUNIT POP5"/>
    <property type="match status" value="1"/>
</dbReference>
<dbReference type="Pfam" id="PF01900">
    <property type="entry name" value="RNase_P_Rpp14"/>
    <property type="match status" value="1"/>
</dbReference>
<dbReference type="PIRSF" id="PIRSF004952">
    <property type="entry name" value="RNase_P_2"/>
    <property type="match status" value="1"/>
</dbReference>
<dbReference type="SUPFAM" id="SSF160350">
    <property type="entry name" value="Rnp2-like"/>
    <property type="match status" value="1"/>
</dbReference>
<keyword id="KW-0963">Cytoplasm</keyword>
<keyword id="KW-0255">Endonuclease</keyword>
<keyword id="KW-0378">Hydrolase</keyword>
<keyword id="KW-0540">Nuclease</keyword>
<keyword id="KW-1185">Reference proteome</keyword>
<keyword id="KW-0819">tRNA processing</keyword>
<sequence>MKILPPTLRVPRRYIAFEVISERELSREELVSLIWDSCLKLHGECETSNFRLWLMKLWRFDFPDAVRVRGILQCQRGYERRVMMALTCAHHHSGVRVAIHILGLSGTIRSATQKFIKPSKKDKY</sequence>
<accession>O26783</accession>
<gene>
    <name evidence="1" type="primary">rnp2</name>
    <name type="ordered locus">MTH_687</name>
</gene>
<proteinExistence type="evidence at protein level"/>
<feature type="chain" id="PRO_0000140024" description="Ribonuclease P protein component 2">
    <location>
        <begin position="1"/>
        <end position="124"/>
    </location>
</feature>
<reference key="1">
    <citation type="journal article" date="1997" name="J. Bacteriol.">
        <title>Complete genome sequence of Methanobacterium thermoautotrophicum deltaH: functional analysis and comparative genomics.</title>
        <authorList>
            <person name="Smith D.R."/>
            <person name="Doucette-Stamm L.A."/>
            <person name="Deloughery C."/>
            <person name="Lee H.-M."/>
            <person name="Dubois J."/>
            <person name="Aldredge T."/>
            <person name="Bashirzadeh R."/>
            <person name="Blakely D."/>
            <person name="Cook R."/>
            <person name="Gilbert K."/>
            <person name="Harrison D."/>
            <person name="Hoang L."/>
            <person name="Keagle P."/>
            <person name="Lumm W."/>
            <person name="Pothier B."/>
            <person name="Qiu D."/>
            <person name="Spadafora R."/>
            <person name="Vicare R."/>
            <person name="Wang Y."/>
            <person name="Wierzbowski J."/>
            <person name="Gibson R."/>
            <person name="Jiwani N."/>
            <person name="Caruso A."/>
            <person name="Bush D."/>
            <person name="Safer H."/>
            <person name="Patwell D."/>
            <person name="Prabhakar S."/>
            <person name="McDougall S."/>
            <person name="Shimer G."/>
            <person name="Goyal A."/>
            <person name="Pietrovski S."/>
            <person name="Church G.M."/>
            <person name="Daniels C.J."/>
            <person name="Mao J.-I."/>
            <person name="Rice P."/>
            <person name="Noelling J."/>
            <person name="Reeve J.N."/>
        </authorList>
    </citation>
    <scope>NUCLEOTIDE SEQUENCE [LARGE SCALE GENOMIC DNA]</scope>
    <source>
        <strain>ATCC 29096 / DSM 1053 / JCM 10044 / NBRC 100330 / Delta H</strain>
    </source>
</reference>
<reference key="2">
    <citation type="journal article" date="2002" name="RNA">
        <title>Archaeal RNase P has multiple protein subunits homologous to eukaryotic nuclear RNase P proteins.</title>
        <authorList>
            <person name="Hall T.A."/>
            <person name="Brown J.W."/>
        </authorList>
    </citation>
    <scope>FUNCTION</scope>
    <scope>SUBUNIT</scope>
    <scope>INDUCTION</scope>
    <source>
        <strain>ATCC 29096 / DSM 1053 / JCM 10044 / NBRC 100330 / Delta H</strain>
    </source>
</reference>
<evidence type="ECO:0000255" key="1">
    <source>
        <dbReference type="HAMAP-Rule" id="MF_00755"/>
    </source>
</evidence>
<evidence type="ECO:0000269" key="2">
    <source>
    </source>
</evidence>
<comment type="function">
    <text evidence="1 2">Part of ribonuclease P, a protein complex that generates mature tRNA molecules by cleaving their 5'-ends.</text>
</comment>
<comment type="catalytic activity">
    <reaction evidence="1">
        <text>Endonucleolytic cleavage of RNA, removing 5'-extranucleotides from tRNA precursor.</text>
        <dbReference type="EC" id="3.1.26.5"/>
    </reaction>
</comment>
<comment type="subunit">
    <text evidence="1 2">Consists of a catalytic RNA component and at least 4-5 protein subunits.</text>
</comment>
<comment type="subcellular location">
    <subcellularLocation>
        <location evidence="1">Cytoplasm</location>
    </subcellularLocation>
</comment>
<comment type="induction">
    <text evidence="2">Constitutively expressed (at protein level).</text>
</comment>
<comment type="similarity">
    <text evidence="1">Belongs to the eukaryotic/archaeal RNase P protein component 2 family.</text>
</comment>
<name>RNP2_METTH</name>
<organism>
    <name type="scientific">Methanothermobacter thermautotrophicus (strain ATCC 29096 / DSM 1053 / JCM 10044 / NBRC 100330 / Delta H)</name>
    <name type="common">Methanobacterium thermoautotrophicum</name>
    <dbReference type="NCBI Taxonomy" id="187420"/>
    <lineage>
        <taxon>Archaea</taxon>
        <taxon>Methanobacteriati</taxon>
        <taxon>Methanobacteriota</taxon>
        <taxon>Methanomada group</taxon>
        <taxon>Methanobacteria</taxon>
        <taxon>Methanobacteriales</taxon>
        <taxon>Methanobacteriaceae</taxon>
        <taxon>Methanothermobacter</taxon>
    </lineage>
</organism>
<protein>
    <recommendedName>
        <fullName evidence="1">Ribonuclease P protein component 2</fullName>
        <shortName evidence="1">RNase P component 2</shortName>
        <ecNumber evidence="1">3.1.26.5</ecNumber>
    </recommendedName>
    <alternativeName>
        <fullName evidence="1">Pop5</fullName>
    </alternativeName>
</protein>